<protein>
    <recommendedName>
        <fullName evidence="1">L-lactate dehydrogenase 2</fullName>
        <shortName evidence="1">L-LDH 2</shortName>
        <ecNumber evidence="1">1.1.1.27</ecNumber>
    </recommendedName>
</protein>
<sequence>MKPRKVMIIGAGNVGTAAAHAFVNQKFVEELILVDLNKERVEGNRKDLADAAAFMPGKMDITVRDASDCADVDIAVITVTAGPLKEGQTRLDELRSTSRIVSSIVPEMMKGGFNGIFLIATNPCDIITYQVWKLSGLPRERVLGTGVWLDTTRLRRLLAEKLDIAAQSIDAFILGEHGDSQFPVWSHSSIYGKPVNEYSVEKLGEALDLKQIGETARDTGFEIYHQKGCTEYGIGGTIVEICRHIFSGSQRALTVSCVLDGEYGESGLAIGVPAVLSQNGVKEIISLKLDEKEKEAFANSVAVIKKSIQSI</sequence>
<feature type="chain" id="PRO_0000168364" description="L-lactate dehydrogenase 2">
    <location>
        <begin position="1"/>
        <end position="311"/>
    </location>
</feature>
<feature type="active site" description="Proton acceptor" evidence="1">
    <location>
        <position position="177"/>
    </location>
</feature>
<feature type="binding site" evidence="1">
    <location>
        <position position="14"/>
    </location>
    <ligand>
        <name>NAD(+)</name>
        <dbReference type="ChEBI" id="CHEBI:57540"/>
    </ligand>
</feature>
<feature type="binding site" evidence="1">
    <location>
        <position position="35"/>
    </location>
    <ligand>
        <name>NAD(+)</name>
        <dbReference type="ChEBI" id="CHEBI:57540"/>
    </ligand>
</feature>
<feature type="binding site" evidence="1">
    <location>
        <position position="40"/>
    </location>
    <ligand>
        <name>NAD(+)</name>
        <dbReference type="ChEBI" id="CHEBI:57540"/>
    </ligand>
</feature>
<feature type="binding site" evidence="1">
    <location>
        <position position="90"/>
    </location>
    <ligand>
        <name>substrate</name>
    </ligand>
</feature>
<feature type="binding site" evidence="1">
    <location>
        <position position="103"/>
    </location>
    <ligand>
        <name>NAD(+)</name>
        <dbReference type="ChEBI" id="CHEBI:57540"/>
    </ligand>
</feature>
<feature type="binding site" evidence="1">
    <location>
        <begin position="120"/>
        <end position="122"/>
    </location>
    <ligand>
        <name>NAD(+)</name>
        <dbReference type="ChEBI" id="CHEBI:57540"/>
    </ligand>
</feature>
<feature type="binding site" evidence="1">
    <location>
        <begin position="122"/>
        <end position="125"/>
    </location>
    <ligand>
        <name>substrate</name>
    </ligand>
</feature>
<feature type="binding site" evidence="1">
    <location>
        <position position="145"/>
    </location>
    <ligand>
        <name>NAD(+)</name>
        <dbReference type="ChEBI" id="CHEBI:57540"/>
    </ligand>
</feature>
<feature type="binding site" evidence="1">
    <location>
        <begin position="150"/>
        <end position="153"/>
    </location>
    <ligand>
        <name>substrate</name>
    </ligand>
</feature>
<feature type="binding site" evidence="1">
    <location>
        <position position="230"/>
    </location>
    <ligand>
        <name>substrate</name>
    </ligand>
</feature>
<dbReference type="EC" id="1.1.1.27" evidence="1"/>
<dbReference type="EMBL" id="AE017262">
    <property type="protein sequence ID" value="AAT04328.1"/>
    <property type="molecule type" value="Genomic_DNA"/>
</dbReference>
<dbReference type="RefSeq" id="WP_003726645.1">
    <property type="nucleotide sequence ID" value="NC_002973.6"/>
</dbReference>
<dbReference type="SMR" id="Q71ZD6"/>
<dbReference type="KEGG" id="lmf:LMOf2365_1553"/>
<dbReference type="HOGENOM" id="CLU_045401_1_2_9"/>
<dbReference type="UniPathway" id="UPA00554">
    <property type="reaction ID" value="UER00611"/>
</dbReference>
<dbReference type="GO" id="GO:0005737">
    <property type="term" value="C:cytoplasm"/>
    <property type="evidence" value="ECO:0007669"/>
    <property type="project" value="UniProtKB-SubCell"/>
</dbReference>
<dbReference type="GO" id="GO:0004459">
    <property type="term" value="F:L-lactate dehydrogenase activity"/>
    <property type="evidence" value="ECO:0007669"/>
    <property type="project" value="UniProtKB-UniRule"/>
</dbReference>
<dbReference type="GO" id="GO:0006096">
    <property type="term" value="P:glycolytic process"/>
    <property type="evidence" value="ECO:0007669"/>
    <property type="project" value="UniProtKB-UniRule"/>
</dbReference>
<dbReference type="GO" id="GO:0006089">
    <property type="term" value="P:lactate metabolic process"/>
    <property type="evidence" value="ECO:0007669"/>
    <property type="project" value="TreeGrafter"/>
</dbReference>
<dbReference type="CDD" id="cd05291">
    <property type="entry name" value="HicDH_like"/>
    <property type="match status" value="1"/>
</dbReference>
<dbReference type="FunFam" id="3.90.110.10:FF:000016">
    <property type="entry name" value="L-lactate dehydrogenase"/>
    <property type="match status" value="1"/>
</dbReference>
<dbReference type="Gene3D" id="3.90.110.10">
    <property type="entry name" value="Lactate dehydrogenase/glycoside hydrolase, family 4, C-terminal"/>
    <property type="match status" value="1"/>
</dbReference>
<dbReference type="Gene3D" id="3.40.50.720">
    <property type="entry name" value="NAD(P)-binding Rossmann-like Domain"/>
    <property type="match status" value="1"/>
</dbReference>
<dbReference type="HAMAP" id="MF_00488">
    <property type="entry name" value="Lactate_dehydrog"/>
    <property type="match status" value="1"/>
</dbReference>
<dbReference type="InterPro" id="IPR001557">
    <property type="entry name" value="L-lactate/malate_DH"/>
</dbReference>
<dbReference type="InterPro" id="IPR011304">
    <property type="entry name" value="L-lactate_DH"/>
</dbReference>
<dbReference type="InterPro" id="IPR018177">
    <property type="entry name" value="L-lactate_DH_AS"/>
</dbReference>
<dbReference type="InterPro" id="IPR022383">
    <property type="entry name" value="Lactate/malate_DH_C"/>
</dbReference>
<dbReference type="InterPro" id="IPR001236">
    <property type="entry name" value="Lactate/malate_DH_N"/>
</dbReference>
<dbReference type="InterPro" id="IPR015955">
    <property type="entry name" value="Lactate_DH/Glyco_Ohase_4_C"/>
</dbReference>
<dbReference type="InterPro" id="IPR036291">
    <property type="entry name" value="NAD(P)-bd_dom_sf"/>
</dbReference>
<dbReference type="NCBIfam" id="TIGR01771">
    <property type="entry name" value="L-LDH-NAD"/>
    <property type="match status" value="1"/>
</dbReference>
<dbReference type="NCBIfam" id="NF000824">
    <property type="entry name" value="PRK00066.1"/>
    <property type="match status" value="1"/>
</dbReference>
<dbReference type="PANTHER" id="PTHR43128">
    <property type="entry name" value="L-2-HYDROXYCARBOXYLATE DEHYDROGENASE (NAD(P)(+))"/>
    <property type="match status" value="1"/>
</dbReference>
<dbReference type="PANTHER" id="PTHR43128:SF16">
    <property type="entry name" value="L-LACTATE DEHYDROGENASE"/>
    <property type="match status" value="1"/>
</dbReference>
<dbReference type="Pfam" id="PF02866">
    <property type="entry name" value="Ldh_1_C"/>
    <property type="match status" value="1"/>
</dbReference>
<dbReference type="Pfam" id="PF00056">
    <property type="entry name" value="Ldh_1_N"/>
    <property type="match status" value="1"/>
</dbReference>
<dbReference type="PIRSF" id="PIRSF000102">
    <property type="entry name" value="Lac_mal_DH"/>
    <property type="match status" value="1"/>
</dbReference>
<dbReference type="PRINTS" id="PR00086">
    <property type="entry name" value="LLDHDRGNASE"/>
</dbReference>
<dbReference type="SUPFAM" id="SSF56327">
    <property type="entry name" value="LDH C-terminal domain-like"/>
    <property type="match status" value="1"/>
</dbReference>
<dbReference type="SUPFAM" id="SSF51735">
    <property type="entry name" value="NAD(P)-binding Rossmann-fold domains"/>
    <property type="match status" value="1"/>
</dbReference>
<dbReference type="PROSITE" id="PS00064">
    <property type="entry name" value="L_LDH"/>
    <property type="match status" value="1"/>
</dbReference>
<evidence type="ECO:0000255" key="1">
    <source>
        <dbReference type="HAMAP-Rule" id="MF_00488"/>
    </source>
</evidence>
<comment type="function">
    <text evidence="1">Catalyzes the conversion of lactate to pyruvate.</text>
</comment>
<comment type="catalytic activity">
    <reaction evidence="1">
        <text>(S)-lactate + NAD(+) = pyruvate + NADH + H(+)</text>
        <dbReference type="Rhea" id="RHEA:23444"/>
        <dbReference type="ChEBI" id="CHEBI:15361"/>
        <dbReference type="ChEBI" id="CHEBI:15378"/>
        <dbReference type="ChEBI" id="CHEBI:16651"/>
        <dbReference type="ChEBI" id="CHEBI:57540"/>
        <dbReference type="ChEBI" id="CHEBI:57945"/>
        <dbReference type="EC" id="1.1.1.27"/>
    </reaction>
</comment>
<comment type="pathway">
    <text evidence="1">Fermentation; pyruvate fermentation to lactate; (S)-lactate from pyruvate: step 1/1.</text>
</comment>
<comment type="subunit">
    <text evidence="1">Homotetramer.</text>
</comment>
<comment type="subcellular location">
    <subcellularLocation>
        <location evidence="1">Cytoplasm</location>
    </subcellularLocation>
</comment>
<comment type="similarity">
    <text evidence="1">Belongs to the LDH/MDH superfamily. LDH family.</text>
</comment>
<reference key="1">
    <citation type="journal article" date="2004" name="Nucleic Acids Res.">
        <title>Whole genome comparisons of serotype 4b and 1/2a strains of the food-borne pathogen Listeria monocytogenes reveal new insights into the core genome components of this species.</title>
        <authorList>
            <person name="Nelson K.E."/>
            <person name="Fouts D.E."/>
            <person name="Mongodin E.F."/>
            <person name="Ravel J."/>
            <person name="DeBoy R.T."/>
            <person name="Kolonay J.F."/>
            <person name="Rasko D.A."/>
            <person name="Angiuoli S.V."/>
            <person name="Gill S.R."/>
            <person name="Paulsen I.T."/>
            <person name="Peterson J.D."/>
            <person name="White O."/>
            <person name="Nelson W.C."/>
            <person name="Nierman W.C."/>
            <person name="Beanan M.J."/>
            <person name="Brinkac L.M."/>
            <person name="Daugherty S.C."/>
            <person name="Dodson R.J."/>
            <person name="Durkin A.S."/>
            <person name="Madupu R."/>
            <person name="Haft D.H."/>
            <person name="Selengut J."/>
            <person name="Van Aken S.E."/>
            <person name="Khouri H.M."/>
            <person name="Fedorova N."/>
            <person name="Forberger H.A."/>
            <person name="Tran B."/>
            <person name="Kathariou S."/>
            <person name="Wonderling L.D."/>
            <person name="Uhlich G.A."/>
            <person name="Bayles D.O."/>
            <person name="Luchansky J.B."/>
            <person name="Fraser C.M."/>
        </authorList>
    </citation>
    <scope>NUCLEOTIDE SEQUENCE [LARGE SCALE GENOMIC DNA]</scope>
    <source>
        <strain>F2365</strain>
    </source>
</reference>
<proteinExistence type="inferred from homology"/>
<name>LDH2_LISMF</name>
<keyword id="KW-0963">Cytoplasm</keyword>
<keyword id="KW-0520">NAD</keyword>
<keyword id="KW-0560">Oxidoreductase</keyword>
<gene>
    <name evidence="1" type="primary">ldh2</name>
    <name type="ordered locus">LMOf2365_1553</name>
</gene>
<organism>
    <name type="scientific">Listeria monocytogenes serotype 4b (strain F2365)</name>
    <dbReference type="NCBI Taxonomy" id="265669"/>
    <lineage>
        <taxon>Bacteria</taxon>
        <taxon>Bacillati</taxon>
        <taxon>Bacillota</taxon>
        <taxon>Bacilli</taxon>
        <taxon>Bacillales</taxon>
        <taxon>Listeriaceae</taxon>
        <taxon>Listeria</taxon>
    </lineage>
</organism>
<accession>Q71ZD6</accession>